<protein>
    <recommendedName>
        <fullName evidence="1">Small integral membrane protein 10-like protein 2B</fullName>
    </recommendedName>
</protein>
<accession>P0DMW5</accession>
<keyword id="KW-1185">Reference proteome</keyword>
<dbReference type="EMBL" id="AL590325">
    <property type="status" value="NOT_ANNOTATED_CDS"/>
    <property type="molecule type" value="Genomic_DNA"/>
</dbReference>
<dbReference type="CCDS" id="CCDS87780.1"/>
<dbReference type="RefSeq" id="NP_001335184.1">
    <property type="nucleotide sequence ID" value="NM_001348255.2"/>
</dbReference>
<dbReference type="RefSeq" id="NP_976051.1">
    <property type="nucleotide sequence ID" value="NM_203306.2"/>
</dbReference>
<dbReference type="SMR" id="P0DMW5"/>
<dbReference type="BioMuta" id="SMIM10L2B"/>
<dbReference type="MassIVE" id="P0DMW5"/>
<dbReference type="Pumba" id="P0DMW5"/>
<dbReference type="DNASU" id="399668"/>
<dbReference type="Ensembl" id="ENST00000433425.4">
    <property type="protein sequence ID" value="ENSP00000487709.1"/>
    <property type="gene ID" value="ENSG00000196972.9"/>
</dbReference>
<dbReference type="GeneID" id="399668"/>
<dbReference type="GeneID" id="644596"/>
<dbReference type="KEGG" id="hsa:399668"/>
<dbReference type="KEGG" id="hsa:644596"/>
<dbReference type="MANE-Select" id="ENST00000433425.4">
    <property type="protein sequence ID" value="ENSP00000487709.1"/>
    <property type="RefSeq nucleotide sequence ID" value="NM_001348255.2"/>
    <property type="RefSeq protein sequence ID" value="NP_001335184.1"/>
</dbReference>
<dbReference type="AGR" id="HGNC:34499"/>
<dbReference type="AGR" id="HGNC:34500"/>
<dbReference type="CTD" id="399668"/>
<dbReference type="CTD" id="644596"/>
<dbReference type="DisGeNET" id="399668"/>
<dbReference type="DisGeNET" id="644596"/>
<dbReference type="GeneCards" id="SMIM10L2B"/>
<dbReference type="HGNC" id="HGNC:34500">
    <property type="gene designation" value="SMIM10L2B"/>
</dbReference>
<dbReference type="HPA" id="ENSG00000196972">
    <property type="expression patterns" value="Group enriched (brain, heart muscle)"/>
</dbReference>
<dbReference type="neXtProt" id="NX_P0DMW5"/>
<dbReference type="OpenTargets" id="ENSG00000178947"/>
<dbReference type="OpenTargets" id="ENSG00000196972"/>
<dbReference type="VEuPathDB" id="HostDB:ENSG00000196972"/>
<dbReference type="GeneTree" id="ENSGT00390000014547"/>
<dbReference type="InParanoid" id="P0DMW5"/>
<dbReference type="OMA" id="VMFNVRL"/>
<dbReference type="OrthoDB" id="9536825at2759"/>
<dbReference type="PAN-GO" id="P0DMW5">
    <property type="GO annotations" value="0 GO annotations based on evolutionary models"/>
</dbReference>
<dbReference type="PathwayCommons" id="P0DMW5"/>
<dbReference type="SignaLink" id="P0DMW5"/>
<dbReference type="BioGRID-ORCS" id="399668">
    <property type="hits" value="0 hits in 1 CRISPR screen"/>
</dbReference>
<dbReference type="BioGRID-ORCS" id="644596">
    <property type="hits" value="0 hits in 1 CRISPR screen"/>
</dbReference>
<dbReference type="Pharos" id="P0DMW5">
    <property type="development level" value="Tdark"/>
</dbReference>
<dbReference type="PRO" id="PR:P0DMW5"/>
<dbReference type="Proteomes" id="UP000005640">
    <property type="component" value="Chromosome X"/>
</dbReference>
<dbReference type="RNAct" id="P0DMW5">
    <property type="molecule type" value="protein"/>
</dbReference>
<dbReference type="Bgee" id="ENSG00000196972">
    <property type="expression patterns" value="Expressed in prefrontal cortex and 92 other cell types or tissues"/>
</dbReference>
<dbReference type="InterPro" id="IPR029367">
    <property type="entry name" value="SMIM10"/>
</dbReference>
<dbReference type="PANTHER" id="PTHR34446">
    <property type="entry name" value="SMALL INTEGRAL MEMBRANE PROTEIN 10"/>
    <property type="match status" value="1"/>
</dbReference>
<dbReference type="PANTHER" id="PTHR34446:SF3">
    <property type="entry name" value="SMALL INTEGRAL MEMBRANE PROTEIN 10-LIKE PROTEIN 2A-RELATED"/>
    <property type="match status" value="1"/>
</dbReference>
<dbReference type="Pfam" id="PF15118">
    <property type="entry name" value="DUF4560"/>
    <property type="match status" value="1"/>
</dbReference>
<feature type="chain" id="PRO_0000433233" description="Small integral membrane protein 10-like protein 2B">
    <location>
        <begin position="1"/>
        <end position="78"/>
    </location>
</feature>
<reference key="1">
    <citation type="journal article" date="2005" name="Nature">
        <title>The DNA sequence of the human X chromosome.</title>
        <authorList>
            <person name="Ross M.T."/>
            <person name="Grafham D.V."/>
            <person name="Coffey A.J."/>
            <person name="Scherer S."/>
            <person name="McLay K."/>
            <person name="Muzny D."/>
            <person name="Platzer M."/>
            <person name="Howell G.R."/>
            <person name="Burrows C."/>
            <person name="Bird C.P."/>
            <person name="Frankish A."/>
            <person name="Lovell F.L."/>
            <person name="Howe K.L."/>
            <person name="Ashurst J.L."/>
            <person name="Fulton R.S."/>
            <person name="Sudbrak R."/>
            <person name="Wen G."/>
            <person name="Jones M.C."/>
            <person name="Hurles M.E."/>
            <person name="Andrews T.D."/>
            <person name="Scott C.E."/>
            <person name="Searle S."/>
            <person name="Ramser J."/>
            <person name="Whittaker A."/>
            <person name="Deadman R."/>
            <person name="Carter N.P."/>
            <person name="Hunt S.E."/>
            <person name="Chen R."/>
            <person name="Cree A."/>
            <person name="Gunaratne P."/>
            <person name="Havlak P."/>
            <person name="Hodgson A."/>
            <person name="Metzker M.L."/>
            <person name="Richards S."/>
            <person name="Scott G."/>
            <person name="Steffen D."/>
            <person name="Sodergren E."/>
            <person name="Wheeler D.A."/>
            <person name="Worley K.C."/>
            <person name="Ainscough R."/>
            <person name="Ambrose K.D."/>
            <person name="Ansari-Lari M.A."/>
            <person name="Aradhya S."/>
            <person name="Ashwell R.I."/>
            <person name="Babbage A.K."/>
            <person name="Bagguley C.L."/>
            <person name="Ballabio A."/>
            <person name="Banerjee R."/>
            <person name="Barker G.E."/>
            <person name="Barlow K.F."/>
            <person name="Barrett I.P."/>
            <person name="Bates K.N."/>
            <person name="Beare D.M."/>
            <person name="Beasley H."/>
            <person name="Beasley O."/>
            <person name="Beck A."/>
            <person name="Bethel G."/>
            <person name="Blechschmidt K."/>
            <person name="Brady N."/>
            <person name="Bray-Allen S."/>
            <person name="Bridgeman A.M."/>
            <person name="Brown A.J."/>
            <person name="Brown M.J."/>
            <person name="Bonnin D."/>
            <person name="Bruford E.A."/>
            <person name="Buhay C."/>
            <person name="Burch P."/>
            <person name="Burford D."/>
            <person name="Burgess J."/>
            <person name="Burrill W."/>
            <person name="Burton J."/>
            <person name="Bye J.M."/>
            <person name="Carder C."/>
            <person name="Carrel L."/>
            <person name="Chako J."/>
            <person name="Chapman J.C."/>
            <person name="Chavez D."/>
            <person name="Chen E."/>
            <person name="Chen G."/>
            <person name="Chen Y."/>
            <person name="Chen Z."/>
            <person name="Chinault C."/>
            <person name="Ciccodicola A."/>
            <person name="Clark S.Y."/>
            <person name="Clarke G."/>
            <person name="Clee C.M."/>
            <person name="Clegg S."/>
            <person name="Clerc-Blankenburg K."/>
            <person name="Clifford K."/>
            <person name="Cobley V."/>
            <person name="Cole C.G."/>
            <person name="Conquer J.S."/>
            <person name="Corby N."/>
            <person name="Connor R.E."/>
            <person name="David R."/>
            <person name="Davies J."/>
            <person name="Davis C."/>
            <person name="Davis J."/>
            <person name="Delgado O."/>
            <person name="Deshazo D."/>
            <person name="Dhami P."/>
            <person name="Ding Y."/>
            <person name="Dinh H."/>
            <person name="Dodsworth S."/>
            <person name="Draper H."/>
            <person name="Dugan-Rocha S."/>
            <person name="Dunham A."/>
            <person name="Dunn M."/>
            <person name="Durbin K.J."/>
            <person name="Dutta I."/>
            <person name="Eades T."/>
            <person name="Ellwood M."/>
            <person name="Emery-Cohen A."/>
            <person name="Errington H."/>
            <person name="Evans K.L."/>
            <person name="Faulkner L."/>
            <person name="Francis F."/>
            <person name="Frankland J."/>
            <person name="Fraser A.E."/>
            <person name="Galgoczy P."/>
            <person name="Gilbert J."/>
            <person name="Gill R."/>
            <person name="Gloeckner G."/>
            <person name="Gregory S.G."/>
            <person name="Gribble S."/>
            <person name="Griffiths C."/>
            <person name="Grocock R."/>
            <person name="Gu Y."/>
            <person name="Gwilliam R."/>
            <person name="Hamilton C."/>
            <person name="Hart E.A."/>
            <person name="Hawes A."/>
            <person name="Heath P.D."/>
            <person name="Heitmann K."/>
            <person name="Hennig S."/>
            <person name="Hernandez J."/>
            <person name="Hinzmann B."/>
            <person name="Ho S."/>
            <person name="Hoffs M."/>
            <person name="Howden P.J."/>
            <person name="Huckle E.J."/>
            <person name="Hume J."/>
            <person name="Hunt P.J."/>
            <person name="Hunt A.R."/>
            <person name="Isherwood J."/>
            <person name="Jacob L."/>
            <person name="Johnson D."/>
            <person name="Jones S."/>
            <person name="de Jong P.J."/>
            <person name="Joseph S.S."/>
            <person name="Keenan S."/>
            <person name="Kelly S."/>
            <person name="Kershaw J.K."/>
            <person name="Khan Z."/>
            <person name="Kioschis P."/>
            <person name="Klages S."/>
            <person name="Knights A.J."/>
            <person name="Kosiura A."/>
            <person name="Kovar-Smith C."/>
            <person name="Laird G.K."/>
            <person name="Langford C."/>
            <person name="Lawlor S."/>
            <person name="Leversha M."/>
            <person name="Lewis L."/>
            <person name="Liu W."/>
            <person name="Lloyd C."/>
            <person name="Lloyd D.M."/>
            <person name="Loulseged H."/>
            <person name="Loveland J.E."/>
            <person name="Lovell J.D."/>
            <person name="Lozado R."/>
            <person name="Lu J."/>
            <person name="Lyne R."/>
            <person name="Ma J."/>
            <person name="Maheshwari M."/>
            <person name="Matthews L.H."/>
            <person name="McDowall J."/>
            <person name="McLaren S."/>
            <person name="McMurray A."/>
            <person name="Meidl P."/>
            <person name="Meitinger T."/>
            <person name="Milne S."/>
            <person name="Miner G."/>
            <person name="Mistry S.L."/>
            <person name="Morgan M."/>
            <person name="Morris S."/>
            <person name="Mueller I."/>
            <person name="Mullikin J.C."/>
            <person name="Nguyen N."/>
            <person name="Nordsiek G."/>
            <person name="Nyakatura G."/>
            <person name="O'dell C.N."/>
            <person name="Okwuonu G."/>
            <person name="Palmer S."/>
            <person name="Pandian R."/>
            <person name="Parker D."/>
            <person name="Parrish J."/>
            <person name="Pasternak S."/>
            <person name="Patel D."/>
            <person name="Pearce A.V."/>
            <person name="Pearson D.M."/>
            <person name="Pelan S.E."/>
            <person name="Perez L."/>
            <person name="Porter K.M."/>
            <person name="Ramsey Y."/>
            <person name="Reichwald K."/>
            <person name="Rhodes S."/>
            <person name="Ridler K.A."/>
            <person name="Schlessinger D."/>
            <person name="Schueler M.G."/>
            <person name="Sehra H.K."/>
            <person name="Shaw-Smith C."/>
            <person name="Shen H."/>
            <person name="Sheridan E.M."/>
            <person name="Shownkeen R."/>
            <person name="Skuce C.D."/>
            <person name="Smith M.L."/>
            <person name="Sotheran E.C."/>
            <person name="Steingruber H.E."/>
            <person name="Steward C.A."/>
            <person name="Storey R."/>
            <person name="Swann R.M."/>
            <person name="Swarbreck D."/>
            <person name="Tabor P.E."/>
            <person name="Taudien S."/>
            <person name="Taylor T."/>
            <person name="Teague B."/>
            <person name="Thomas K."/>
            <person name="Thorpe A."/>
            <person name="Timms K."/>
            <person name="Tracey A."/>
            <person name="Trevanion S."/>
            <person name="Tromans A.C."/>
            <person name="d'Urso M."/>
            <person name="Verduzco D."/>
            <person name="Villasana D."/>
            <person name="Waldron L."/>
            <person name="Wall M."/>
            <person name="Wang Q."/>
            <person name="Warren J."/>
            <person name="Warry G.L."/>
            <person name="Wei X."/>
            <person name="West A."/>
            <person name="Whitehead S.L."/>
            <person name="Whiteley M.N."/>
            <person name="Wilkinson J.E."/>
            <person name="Willey D.L."/>
            <person name="Williams G."/>
            <person name="Williams L."/>
            <person name="Williamson A."/>
            <person name="Williamson H."/>
            <person name="Wilming L."/>
            <person name="Woodmansey R.L."/>
            <person name="Wray P.W."/>
            <person name="Yen J."/>
            <person name="Zhang J."/>
            <person name="Zhou J."/>
            <person name="Zoghbi H."/>
            <person name="Zorilla S."/>
            <person name="Buck D."/>
            <person name="Reinhardt R."/>
            <person name="Poustka A."/>
            <person name="Rosenthal A."/>
            <person name="Lehrach H."/>
            <person name="Meindl A."/>
            <person name="Minx P.J."/>
            <person name="Hillier L.W."/>
            <person name="Willard H.F."/>
            <person name="Wilson R.K."/>
            <person name="Waterston R.H."/>
            <person name="Rice C.M."/>
            <person name="Vaudin M."/>
            <person name="Coulson A."/>
            <person name="Nelson D.L."/>
            <person name="Weinstock G."/>
            <person name="Sulston J.E."/>
            <person name="Durbin R.M."/>
            <person name="Hubbard T."/>
            <person name="Gibbs R.A."/>
            <person name="Beck S."/>
            <person name="Rogers J."/>
            <person name="Bentley D.R."/>
        </authorList>
    </citation>
    <scope>NUCLEOTIDE SEQUENCE [LARGE SCALE GENOMIC DNA]</scope>
</reference>
<gene>
    <name evidence="2" type="primary">SMIM10L2B</name>
    <name evidence="2" type="synonym">LINC00087</name>
    <name evidence="2" type="synonym">NCRNA00087</name>
</gene>
<name>SIL2B_HUMAN</name>
<sequence length="78" mass="8389">MAASAALSAAAAAAALSGLAVRLSRSAAARGSYGAFCKGLTRTLLTFFDLAWRLRMNFPYFYIVASVMLNVRLQVRIE</sequence>
<organism>
    <name type="scientific">Homo sapiens</name>
    <name type="common">Human</name>
    <dbReference type="NCBI Taxonomy" id="9606"/>
    <lineage>
        <taxon>Eukaryota</taxon>
        <taxon>Metazoa</taxon>
        <taxon>Chordata</taxon>
        <taxon>Craniata</taxon>
        <taxon>Vertebrata</taxon>
        <taxon>Euteleostomi</taxon>
        <taxon>Mammalia</taxon>
        <taxon>Eutheria</taxon>
        <taxon>Euarchontoglires</taxon>
        <taxon>Primates</taxon>
        <taxon>Haplorrhini</taxon>
        <taxon>Catarrhini</taxon>
        <taxon>Hominidae</taxon>
        <taxon>Homo</taxon>
    </lineage>
</organism>
<evidence type="ECO:0000305" key="1"/>
<evidence type="ECO:0000312" key="2">
    <source>
        <dbReference type="HGNC" id="HGNC:34500"/>
    </source>
</evidence>
<proteinExistence type="predicted"/>